<dbReference type="EC" id="2.5.1.6" evidence="1"/>
<dbReference type="EMBL" id="FM242711">
    <property type="protein sequence ID" value="CAS05438.1"/>
    <property type="molecule type" value="Genomic_DNA"/>
</dbReference>
<dbReference type="RefSeq" id="WP_003727328.1">
    <property type="nucleotide sequence ID" value="NC_012488.1"/>
</dbReference>
<dbReference type="SMR" id="C1KVW3"/>
<dbReference type="KEGG" id="lmc:Lm4b_01677"/>
<dbReference type="HOGENOM" id="CLU_041802_1_1_9"/>
<dbReference type="UniPathway" id="UPA00315">
    <property type="reaction ID" value="UER00080"/>
</dbReference>
<dbReference type="GO" id="GO:0005737">
    <property type="term" value="C:cytoplasm"/>
    <property type="evidence" value="ECO:0007669"/>
    <property type="project" value="UniProtKB-SubCell"/>
</dbReference>
<dbReference type="GO" id="GO:0005524">
    <property type="term" value="F:ATP binding"/>
    <property type="evidence" value="ECO:0007669"/>
    <property type="project" value="UniProtKB-UniRule"/>
</dbReference>
<dbReference type="GO" id="GO:0000287">
    <property type="term" value="F:magnesium ion binding"/>
    <property type="evidence" value="ECO:0007669"/>
    <property type="project" value="UniProtKB-UniRule"/>
</dbReference>
<dbReference type="GO" id="GO:0004478">
    <property type="term" value="F:methionine adenosyltransferase activity"/>
    <property type="evidence" value="ECO:0007669"/>
    <property type="project" value="UniProtKB-UniRule"/>
</dbReference>
<dbReference type="GO" id="GO:0006730">
    <property type="term" value="P:one-carbon metabolic process"/>
    <property type="evidence" value="ECO:0007669"/>
    <property type="project" value="UniProtKB-KW"/>
</dbReference>
<dbReference type="GO" id="GO:0006556">
    <property type="term" value="P:S-adenosylmethionine biosynthetic process"/>
    <property type="evidence" value="ECO:0007669"/>
    <property type="project" value="UniProtKB-UniRule"/>
</dbReference>
<dbReference type="CDD" id="cd18079">
    <property type="entry name" value="S-AdoMet_synt"/>
    <property type="match status" value="1"/>
</dbReference>
<dbReference type="FunFam" id="3.30.300.10:FF:000003">
    <property type="entry name" value="S-adenosylmethionine synthase"/>
    <property type="match status" value="1"/>
</dbReference>
<dbReference type="FunFam" id="3.30.300.10:FF:000004">
    <property type="entry name" value="S-adenosylmethionine synthase"/>
    <property type="match status" value="1"/>
</dbReference>
<dbReference type="Gene3D" id="3.30.300.10">
    <property type="match status" value="3"/>
</dbReference>
<dbReference type="HAMAP" id="MF_00086">
    <property type="entry name" value="S_AdoMet_synth1"/>
    <property type="match status" value="1"/>
</dbReference>
<dbReference type="InterPro" id="IPR022631">
    <property type="entry name" value="ADOMET_SYNTHASE_CS"/>
</dbReference>
<dbReference type="InterPro" id="IPR022630">
    <property type="entry name" value="S-AdoMet_synt_C"/>
</dbReference>
<dbReference type="InterPro" id="IPR022629">
    <property type="entry name" value="S-AdoMet_synt_central"/>
</dbReference>
<dbReference type="InterPro" id="IPR022628">
    <property type="entry name" value="S-AdoMet_synt_N"/>
</dbReference>
<dbReference type="InterPro" id="IPR002133">
    <property type="entry name" value="S-AdoMet_synthetase"/>
</dbReference>
<dbReference type="InterPro" id="IPR022636">
    <property type="entry name" value="S-AdoMet_synthetase_sfam"/>
</dbReference>
<dbReference type="NCBIfam" id="TIGR01034">
    <property type="entry name" value="metK"/>
    <property type="match status" value="1"/>
</dbReference>
<dbReference type="PANTHER" id="PTHR11964">
    <property type="entry name" value="S-ADENOSYLMETHIONINE SYNTHETASE"/>
    <property type="match status" value="1"/>
</dbReference>
<dbReference type="Pfam" id="PF02773">
    <property type="entry name" value="S-AdoMet_synt_C"/>
    <property type="match status" value="1"/>
</dbReference>
<dbReference type="Pfam" id="PF02772">
    <property type="entry name" value="S-AdoMet_synt_M"/>
    <property type="match status" value="1"/>
</dbReference>
<dbReference type="Pfam" id="PF00438">
    <property type="entry name" value="S-AdoMet_synt_N"/>
    <property type="match status" value="1"/>
</dbReference>
<dbReference type="PIRSF" id="PIRSF000497">
    <property type="entry name" value="MAT"/>
    <property type="match status" value="1"/>
</dbReference>
<dbReference type="SUPFAM" id="SSF55973">
    <property type="entry name" value="S-adenosylmethionine synthetase"/>
    <property type="match status" value="3"/>
</dbReference>
<dbReference type="PROSITE" id="PS00376">
    <property type="entry name" value="ADOMET_SYNTHASE_1"/>
    <property type="match status" value="1"/>
</dbReference>
<dbReference type="PROSITE" id="PS00377">
    <property type="entry name" value="ADOMET_SYNTHASE_2"/>
    <property type="match status" value="1"/>
</dbReference>
<proteinExistence type="inferred from homology"/>
<feature type="chain" id="PRO_1000202622" description="S-adenosylmethionine synthase">
    <location>
        <begin position="1"/>
        <end position="399"/>
    </location>
</feature>
<feature type="region of interest" description="Flexible loop" evidence="1">
    <location>
        <begin position="101"/>
        <end position="111"/>
    </location>
</feature>
<feature type="binding site" description="in other chain" evidence="1">
    <location>
        <position position="17"/>
    </location>
    <ligand>
        <name>ATP</name>
        <dbReference type="ChEBI" id="CHEBI:30616"/>
        <note>ligand shared between two neighboring subunits</note>
    </ligand>
</feature>
<feature type="binding site" evidence="1">
    <location>
        <position position="19"/>
    </location>
    <ligand>
        <name>Mg(2+)</name>
        <dbReference type="ChEBI" id="CHEBI:18420"/>
    </ligand>
</feature>
<feature type="binding site" evidence="1">
    <location>
        <position position="45"/>
    </location>
    <ligand>
        <name>K(+)</name>
        <dbReference type="ChEBI" id="CHEBI:29103"/>
    </ligand>
</feature>
<feature type="binding site" description="in other chain" evidence="1">
    <location>
        <position position="58"/>
    </location>
    <ligand>
        <name>L-methionine</name>
        <dbReference type="ChEBI" id="CHEBI:57844"/>
        <note>ligand shared between two neighboring subunits</note>
    </ligand>
</feature>
<feature type="binding site" description="in other chain" evidence="1">
    <location>
        <position position="101"/>
    </location>
    <ligand>
        <name>L-methionine</name>
        <dbReference type="ChEBI" id="CHEBI:57844"/>
        <note>ligand shared between two neighboring subunits</note>
    </ligand>
</feature>
<feature type="binding site" description="in other chain" evidence="1">
    <location>
        <begin position="177"/>
        <end position="179"/>
    </location>
    <ligand>
        <name>ATP</name>
        <dbReference type="ChEBI" id="CHEBI:30616"/>
        <note>ligand shared between two neighboring subunits</note>
    </ligand>
</feature>
<feature type="binding site" description="in other chain" evidence="1">
    <location>
        <begin position="244"/>
        <end position="245"/>
    </location>
    <ligand>
        <name>ATP</name>
        <dbReference type="ChEBI" id="CHEBI:30616"/>
        <note>ligand shared between two neighboring subunits</note>
    </ligand>
</feature>
<feature type="binding site" evidence="1">
    <location>
        <position position="253"/>
    </location>
    <ligand>
        <name>ATP</name>
        <dbReference type="ChEBI" id="CHEBI:30616"/>
        <note>ligand shared between two neighboring subunits</note>
    </ligand>
</feature>
<feature type="binding site" evidence="1">
    <location>
        <position position="253"/>
    </location>
    <ligand>
        <name>L-methionine</name>
        <dbReference type="ChEBI" id="CHEBI:57844"/>
        <note>ligand shared between two neighboring subunits</note>
    </ligand>
</feature>
<feature type="binding site" description="in other chain" evidence="1">
    <location>
        <begin position="259"/>
        <end position="260"/>
    </location>
    <ligand>
        <name>ATP</name>
        <dbReference type="ChEBI" id="CHEBI:30616"/>
        <note>ligand shared between two neighboring subunits</note>
    </ligand>
</feature>
<feature type="binding site" evidence="1">
    <location>
        <position position="276"/>
    </location>
    <ligand>
        <name>ATP</name>
        <dbReference type="ChEBI" id="CHEBI:30616"/>
        <note>ligand shared between two neighboring subunits</note>
    </ligand>
</feature>
<feature type="binding site" evidence="1">
    <location>
        <position position="280"/>
    </location>
    <ligand>
        <name>ATP</name>
        <dbReference type="ChEBI" id="CHEBI:30616"/>
        <note>ligand shared between two neighboring subunits</note>
    </ligand>
</feature>
<feature type="binding site" description="in other chain" evidence="1">
    <location>
        <position position="284"/>
    </location>
    <ligand>
        <name>L-methionine</name>
        <dbReference type="ChEBI" id="CHEBI:57844"/>
        <note>ligand shared between two neighboring subunits</note>
    </ligand>
</feature>
<sequence length="399" mass="43623">MAKNRHLFTSESVSDGHPDKIADQISDAILDAIISKDPDARVACETTVTTGLVLVAGEITTSVYVDIPKIVRDTIKEIGYTRAKYGFDAETCAVLTAIDEQSPDIAQGVDEALESRSGKEIDAAIEAIGAGDQGLMFGFATDETEELMPLPIFLAHGLARKLTELRKTNKLDYLRPDAKTQVTVEYDEFNQPVRIDTIVVSTQHHPDITQEQIAKDLHTYLFPEVIDASFLDEDTKYFINPTGRFVIGGPLGDAGLTGRKIIVDTYGGYARHGGGAFSGKDPTKVDRSGAYAARYVAKNIVAAGLAKKVEVQVAYAIGVARPVSISIDTYGTSDYSEQELIDGVNELFDLRPAGIIHMLDLRRPIYRQTAAFGHFGRSDLDLPWERTDKAEALKKLIVK</sequence>
<organism>
    <name type="scientific">Listeria monocytogenes serotype 4b (strain CLIP80459)</name>
    <dbReference type="NCBI Taxonomy" id="568819"/>
    <lineage>
        <taxon>Bacteria</taxon>
        <taxon>Bacillati</taxon>
        <taxon>Bacillota</taxon>
        <taxon>Bacilli</taxon>
        <taxon>Bacillales</taxon>
        <taxon>Listeriaceae</taxon>
        <taxon>Listeria</taxon>
    </lineage>
</organism>
<reference key="1">
    <citation type="journal article" date="2012" name="BMC Genomics">
        <title>Comparative genomics and transcriptomics of lineages I, II, and III strains of Listeria monocytogenes.</title>
        <authorList>
            <person name="Hain T."/>
            <person name="Ghai R."/>
            <person name="Billion A."/>
            <person name="Kuenne C.T."/>
            <person name="Steinweg C."/>
            <person name="Izar B."/>
            <person name="Mohamed W."/>
            <person name="Mraheil M."/>
            <person name="Domann E."/>
            <person name="Schaffrath S."/>
            <person name="Karst U."/>
            <person name="Goesmann A."/>
            <person name="Oehm S."/>
            <person name="Puhler A."/>
            <person name="Merkl R."/>
            <person name="Vorwerk S."/>
            <person name="Glaser P."/>
            <person name="Garrido P."/>
            <person name="Rusniok C."/>
            <person name="Buchrieser C."/>
            <person name="Goebel W."/>
            <person name="Chakraborty T."/>
        </authorList>
    </citation>
    <scope>NUCLEOTIDE SEQUENCE [LARGE SCALE GENOMIC DNA]</scope>
    <source>
        <strain>CLIP80459</strain>
    </source>
</reference>
<comment type="function">
    <text evidence="1">Catalyzes the formation of S-adenosylmethionine (AdoMet) from methionine and ATP. The overall synthetic reaction is composed of two sequential steps, AdoMet formation and the subsequent tripolyphosphate hydrolysis which occurs prior to release of AdoMet from the enzyme.</text>
</comment>
<comment type="catalytic activity">
    <reaction evidence="1">
        <text>L-methionine + ATP + H2O = S-adenosyl-L-methionine + phosphate + diphosphate</text>
        <dbReference type="Rhea" id="RHEA:21080"/>
        <dbReference type="ChEBI" id="CHEBI:15377"/>
        <dbReference type="ChEBI" id="CHEBI:30616"/>
        <dbReference type="ChEBI" id="CHEBI:33019"/>
        <dbReference type="ChEBI" id="CHEBI:43474"/>
        <dbReference type="ChEBI" id="CHEBI:57844"/>
        <dbReference type="ChEBI" id="CHEBI:59789"/>
        <dbReference type="EC" id="2.5.1.6"/>
    </reaction>
</comment>
<comment type="cofactor">
    <cofactor evidence="1">
        <name>Mg(2+)</name>
        <dbReference type="ChEBI" id="CHEBI:18420"/>
    </cofactor>
    <text evidence="1">Binds 2 divalent ions per subunit.</text>
</comment>
<comment type="cofactor">
    <cofactor evidence="1">
        <name>K(+)</name>
        <dbReference type="ChEBI" id="CHEBI:29103"/>
    </cofactor>
    <text evidence="1">Binds 1 potassium ion per subunit.</text>
</comment>
<comment type="pathway">
    <text evidence="1">Amino-acid biosynthesis; S-adenosyl-L-methionine biosynthesis; S-adenosyl-L-methionine from L-methionine: step 1/1.</text>
</comment>
<comment type="subunit">
    <text evidence="1">Homotetramer; dimer of dimers.</text>
</comment>
<comment type="subcellular location">
    <subcellularLocation>
        <location evidence="1">Cytoplasm</location>
    </subcellularLocation>
</comment>
<comment type="similarity">
    <text evidence="1">Belongs to the AdoMet synthase family.</text>
</comment>
<evidence type="ECO:0000255" key="1">
    <source>
        <dbReference type="HAMAP-Rule" id="MF_00086"/>
    </source>
</evidence>
<protein>
    <recommendedName>
        <fullName evidence="1">S-adenosylmethionine synthase</fullName>
        <shortName evidence="1">AdoMet synthase</shortName>
        <ecNumber evidence="1">2.5.1.6</ecNumber>
    </recommendedName>
    <alternativeName>
        <fullName evidence="1">MAT</fullName>
    </alternativeName>
    <alternativeName>
        <fullName evidence="1">Methionine adenosyltransferase</fullName>
    </alternativeName>
</protein>
<gene>
    <name evidence="1" type="primary">metK</name>
    <name type="ordered locus">Lm4b_01677</name>
</gene>
<name>METK_LISMC</name>
<accession>C1KVW3</accession>
<keyword id="KW-0067">ATP-binding</keyword>
<keyword id="KW-0963">Cytoplasm</keyword>
<keyword id="KW-0460">Magnesium</keyword>
<keyword id="KW-0479">Metal-binding</keyword>
<keyword id="KW-0547">Nucleotide-binding</keyword>
<keyword id="KW-0554">One-carbon metabolism</keyword>
<keyword id="KW-0630">Potassium</keyword>
<keyword id="KW-0808">Transferase</keyword>